<protein>
    <recommendedName>
        <fullName evidence="10">Leghemoglobin 1</fullName>
        <shortName evidence="10">GmLb1</shortName>
    </recommendedName>
    <alternativeName>
        <fullName evidence="11">Hemoglobin 2-1</fullName>
        <shortName evidence="11">GmGLB2-1</shortName>
    </alternativeName>
    <alternativeName>
        <fullName evidence="11 12">Leghemoglobin C3</fullName>
        <shortName evidence="13">GmLbc3</shortName>
    </alternativeName>
</protein>
<accession>P02237</accession>
<accession>A0A0R0HW47</accession>
<dbReference type="EMBL" id="J01302">
    <property type="status" value="NOT_ANNOTATED_CDS"/>
    <property type="molecule type" value="Genomic_DNA"/>
</dbReference>
<dbReference type="EMBL" id="V00454">
    <property type="protein sequence ID" value="CAA23732.1"/>
    <property type="molecule type" value="Genomic_DNA"/>
</dbReference>
<dbReference type="EMBL" id="CM000843">
    <property type="protein sequence ID" value="KRH34684.1"/>
    <property type="molecule type" value="Genomic_DNA"/>
</dbReference>
<dbReference type="PIR" id="A93426">
    <property type="entry name" value="GPSYC3"/>
</dbReference>
<dbReference type="SMR" id="P02237"/>
<dbReference type="STRING" id="3847.P02237"/>
<dbReference type="PaxDb" id="3847-GLYMA10G34260.1"/>
<dbReference type="ProMEX" id="P02237"/>
<dbReference type="EnsemblPlants" id="KRH34684">
    <property type="protein sequence ID" value="KRH34684"/>
    <property type="gene ID" value="GLYMA_10G198800"/>
</dbReference>
<dbReference type="Gramene" id="KRH34684">
    <property type="protein sequence ID" value="KRH34684"/>
    <property type="gene ID" value="GLYMA_10G198800"/>
</dbReference>
<dbReference type="eggNOG" id="KOG3378">
    <property type="taxonomic scope" value="Eukaryota"/>
</dbReference>
<dbReference type="HOGENOM" id="CLU_003827_11_2_1"/>
<dbReference type="InParanoid" id="P02237"/>
<dbReference type="OMA" id="TAWEGAY"/>
<dbReference type="OrthoDB" id="2012505at2759"/>
<dbReference type="Proteomes" id="UP000008827">
    <property type="component" value="Chromosome 10"/>
</dbReference>
<dbReference type="GO" id="GO:0005829">
    <property type="term" value="C:cytosol"/>
    <property type="evidence" value="ECO:0007669"/>
    <property type="project" value="UniProtKB-SubCell"/>
</dbReference>
<dbReference type="GO" id="GO:0005634">
    <property type="term" value="C:nucleus"/>
    <property type="evidence" value="ECO:0007669"/>
    <property type="project" value="UniProtKB-SubCell"/>
</dbReference>
<dbReference type="GO" id="GO:0020037">
    <property type="term" value="F:heme binding"/>
    <property type="evidence" value="ECO:0007669"/>
    <property type="project" value="InterPro"/>
</dbReference>
<dbReference type="GO" id="GO:0046872">
    <property type="term" value="F:metal ion binding"/>
    <property type="evidence" value="ECO:0007669"/>
    <property type="project" value="UniProtKB-KW"/>
</dbReference>
<dbReference type="GO" id="GO:0019825">
    <property type="term" value="F:oxygen binding"/>
    <property type="evidence" value="ECO:0007669"/>
    <property type="project" value="InterPro"/>
</dbReference>
<dbReference type="GO" id="GO:0005344">
    <property type="term" value="F:oxygen carrier activity"/>
    <property type="evidence" value="ECO:0007669"/>
    <property type="project" value="UniProtKB-KW"/>
</dbReference>
<dbReference type="GO" id="GO:0009877">
    <property type="term" value="P:nodulation"/>
    <property type="evidence" value="ECO:0000314"/>
    <property type="project" value="UniProtKB"/>
</dbReference>
<dbReference type="GO" id="GO:0032025">
    <property type="term" value="P:response to cobalt ion"/>
    <property type="evidence" value="ECO:0000270"/>
    <property type="project" value="UniProtKB"/>
</dbReference>
<dbReference type="GO" id="GO:1901698">
    <property type="term" value="P:response to nitrogen compound"/>
    <property type="evidence" value="ECO:0000270"/>
    <property type="project" value="UniProtKB"/>
</dbReference>
<dbReference type="CDD" id="cd08923">
    <property type="entry name" value="class1-2_nsHbs_Lbs"/>
    <property type="match status" value="1"/>
</dbReference>
<dbReference type="Gene3D" id="1.10.490.10">
    <property type="entry name" value="Globins"/>
    <property type="match status" value="1"/>
</dbReference>
<dbReference type="InterPro" id="IPR000971">
    <property type="entry name" value="Globin"/>
</dbReference>
<dbReference type="InterPro" id="IPR009050">
    <property type="entry name" value="Globin-like_sf"/>
</dbReference>
<dbReference type="InterPro" id="IPR012292">
    <property type="entry name" value="Globin/Proto"/>
</dbReference>
<dbReference type="InterPro" id="IPR001032">
    <property type="entry name" value="Leghaemoglobin-like"/>
</dbReference>
<dbReference type="InterPro" id="IPR019824">
    <property type="entry name" value="Leghaemoglobin_Fe_BS"/>
</dbReference>
<dbReference type="PANTHER" id="PTHR22924">
    <property type="entry name" value="LEGHEMOGLOBIN-RELATED"/>
    <property type="match status" value="1"/>
</dbReference>
<dbReference type="PANTHER" id="PTHR22924:SF92">
    <property type="entry name" value="NON-SYMBIOTIC HEMOGLOBIN 2"/>
    <property type="match status" value="1"/>
</dbReference>
<dbReference type="Pfam" id="PF00042">
    <property type="entry name" value="Globin"/>
    <property type="match status" value="1"/>
</dbReference>
<dbReference type="PRINTS" id="PR00188">
    <property type="entry name" value="PLANTGLOBIN"/>
</dbReference>
<dbReference type="SUPFAM" id="SSF46458">
    <property type="entry name" value="Globin-like"/>
    <property type="match status" value="1"/>
</dbReference>
<dbReference type="PROSITE" id="PS01033">
    <property type="entry name" value="GLOBIN"/>
    <property type="match status" value="1"/>
</dbReference>
<dbReference type="PROSITE" id="PS00208">
    <property type="entry name" value="PLANT_GLOBIN"/>
    <property type="match status" value="1"/>
</dbReference>
<gene>
    <name evidence="10" type="primary">LB1</name>
    <name evidence="11" type="synonym">GLB2-1</name>
    <name evidence="11" type="synonym">LBC3</name>
    <name type="synonym">LGB1</name>
    <name evidence="15" type="ordered locus">Glyma_10G198800</name>
</gene>
<comment type="function">
    <text evidence="4 7 8 9">Leghemoglobin that reversibly binds oxygen O(2) through a pentacoordinated heme iron (By similarity). In root nodules, facilitates the diffusion of oxygen to the bacteroids while preventing the bacterial nitrogenase from being inactivated by buffering dioxygen, nitric oxide and carbon monoxide, and promoting the formation of reactive oxygen species (ROS, e.g. H(2)O(2)) (PubMed:17540516, PubMed:22308405, PubMed:32297921). This role is essential for symbiotic nitrogen fixation (SNF) (PubMed:17540516, PubMed:32297921).</text>
</comment>
<comment type="subunit">
    <text evidence="2">Monomer.</text>
</comment>
<comment type="subcellular location">
    <subcellularLocation>
        <location evidence="2">Cytoplasm</location>
        <location evidence="2">Cytosol</location>
    </subcellularLocation>
    <subcellularLocation>
        <location evidence="2">Nucleus</location>
    </subcellularLocation>
</comment>
<comment type="tissue specificity">
    <text evidence="8">Specifically expressed in root nodules, and barely in pods.</text>
</comment>
<comment type="developmental stage">
    <text evidence="8">Gradual accumulation in developping and maturating root nodules (PubMed:32297921). Levels decline during nodule senescence (PubMed:32297921).</text>
</comment>
<comment type="induction">
    <text evidence="6 8">Negatively regulated by cobalt (Co) in a dose-dependent manner (PubMed:18838253). Suppressed by exposure to excess nitrogen (N); this repression is associated with nodule greening and reduced biological nitrogen fixation (BN) efficiency (PubMed:32297921).</text>
</comment>
<comment type="PTM">
    <text evidence="1 7">Nitrated mainly at Tyr-31 and, to a lower extent, at Tyr-26 and Tyr-134, in effective nodules and particularly in hypoxic conditions; this mechanism may play a protective role in the symbiosis by buffering toxic peroxynitrite NO(2)(-) (PubMed:22308405). Nitration level decrease during nodule senescence (By similarity).</text>
</comment>
<comment type="PTM">
    <text evidence="3">Phosphorylation at Ser-46 disrupts the molecular environment of its porphyrin ring oxygen binding pocket, thus leading to a reduced oxygen consumption and to the delivery of oxygen O(2) to symbiosomes.</text>
</comment>
<comment type="similarity">
    <text evidence="13">Belongs to the plant globin family.</text>
</comment>
<feature type="initiator methionine" description="Removed" evidence="14">
    <location>
        <position position="1"/>
    </location>
</feature>
<feature type="chain" id="PRO_0000193005" description="Leghemoglobin 1">
    <location>
        <begin position="2"/>
        <end position="145"/>
    </location>
</feature>
<feature type="domain" description="Globin" evidence="5">
    <location>
        <begin position="3"/>
        <end position="145"/>
    </location>
</feature>
<feature type="binding site" evidence="2">
    <location>
        <position position="46"/>
    </location>
    <ligand>
        <name>heme b</name>
        <dbReference type="ChEBI" id="CHEBI:60344"/>
    </ligand>
</feature>
<feature type="binding site" evidence="2">
    <location>
        <position position="62"/>
    </location>
    <ligand>
        <name>O2</name>
        <dbReference type="ChEBI" id="CHEBI:15379"/>
    </ligand>
</feature>
<feature type="binding site" evidence="2">
    <location>
        <position position="65"/>
    </location>
    <ligand>
        <name>heme b</name>
        <dbReference type="ChEBI" id="CHEBI:60344"/>
    </ligand>
</feature>
<feature type="binding site" description="proximal binding residue" evidence="5">
    <location>
        <position position="93"/>
    </location>
    <ligand>
        <name>heme b</name>
        <dbReference type="ChEBI" id="CHEBI:60344"/>
    </ligand>
    <ligandPart>
        <name>Fe</name>
        <dbReference type="ChEBI" id="CHEBI:18248"/>
    </ligandPart>
</feature>
<feature type="binding site" evidence="2">
    <location>
        <position position="96"/>
    </location>
    <ligand>
        <name>heme b</name>
        <dbReference type="ChEBI" id="CHEBI:60344"/>
    </ligand>
</feature>
<feature type="modified residue" description="N-acetylglycine" evidence="7">
    <location>
        <position position="2"/>
    </location>
</feature>
<feature type="modified residue" description="Nitrated tyrosine" evidence="1">
    <location>
        <position position="26"/>
    </location>
</feature>
<feature type="modified residue" description="Nitrated tyrosine" evidence="1">
    <location>
        <position position="31"/>
    </location>
</feature>
<feature type="modified residue" description="Phosphoserine" evidence="3">
    <location>
        <position position="46"/>
    </location>
</feature>
<feature type="modified residue" description="Nitrated tyrosine" evidence="1">
    <location>
        <position position="134"/>
    </location>
</feature>
<keyword id="KW-0007">Acetylation</keyword>
<keyword id="KW-0963">Cytoplasm</keyword>
<keyword id="KW-0349">Heme</keyword>
<keyword id="KW-0408">Iron</keyword>
<keyword id="KW-0479">Metal-binding</keyword>
<keyword id="KW-0944">Nitration</keyword>
<keyword id="KW-0535">Nitrogen fixation</keyword>
<keyword id="KW-0536">Nodulation</keyword>
<keyword id="KW-0539">Nucleus</keyword>
<keyword id="KW-0561">Oxygen transport</keyword>
<keyword id="KW-0597">Phosphoprotein</keyword>
<keyword id="KW-1185">Reference proteome</keyword>
<keyword id="KW-0813">Transport</keyword>
<reference key="1">
    <citation type="journal article" date="1982" name="Nucleic Acids Res.">
        <title>The nucleotide sequences of two leghemoglobin genes from soybean.</title>
        <authorList>
            <person name="Wiborg O."/>
            <person name="Hyldig-Nielsen J.J."/>
            <person name="Jensen E.O."/>
            <person name="Paludan K."/>
            <person name="Marcker K.A."/>
        </authorList>
    </citation>
    <scope>NUCLEOTIDE SEQUENCE [GENOMIC DNA]</scope>
</reference>
<reference key="2">
    <citation type="journal article" date="1982" name="Proc. Natl. Acad. Sci. U.S.A.">
        <title>Soybean leghemoglobin gene family: normal, pseudo, and truncated genes.</title>
        <authorList>
            <person name="Brisson N."/>
            <person name="Verma D.P.S."/>
        </authorList>
    </citation>
    <scope>NUCLEOTIDE SEQUENCE [GENOMIC DNA]</scope>
</reference>
<reference key="3">
    <citation type="journal article" date="2010" name="Nature">
        <title>Genome sequence of the palaeopolyploid soybean.</title>
        <authorList>
            <person name="Schmutz J."/>
            <person name="Cannon S.B."/>
            <person name="Schlueter J."/>
            <person name="Ma J."/>
            <person name="Mitros T."/>
            <person name="Nelson W."/>
            <person name="Hyten D.L."/>
            <person name="Song Q."/>
            <person name="Thelen J.J."/>
            <person name="Cheng J."/>
            <person name="Xu D."/>
            <person name="Hellsten U."/>
            <person name="May G.D."/>
            <person name="Yu Y."/>
            <person name="Sakurai T."/>
            <person name="Umezawa T."/>
            <person name="Bhattacharyya M.K."/>
            <person name="Sandhu D."/>
            <person name="Valliyodan B."/>
            <person name="Lindquist E."/>
            <person name="Peto M."/>
            <person name="Grant D."/>
            <person name="Shu S."/>
            <person name="Goodstein D."/>
            <person name="Barry K."/>
            <person name="Futrell-Griggs M."/>
            <person name="Abernathy B."/>
            <person name="Du J."/>
            <person name="Tian Z."/>
            <person name="Zhu L."/>
            <person name="Gill N."/>
            <person name="Joshi T."/>
            <person name="Libault M."/>
            <person name="Sethuraman A."/>
            <person name="Zhang X.-C."/>
            <person name="Shinozaki K."/>
            <person name="Nguyen H.T."/>
            <person name="Wing R.A."/>
            <person name="Cregan P."/>
            <person name="Specht J."/>
            <person name="Grimwood J."/>
            <person name="Rokhsar D."/>
            <person name="Stacey G."/>
            <person name="Shoemaker R.C."/>
            <person name="Jackson S.A."/>
        </authorList>
    </citation>
    <scope>NUCLEOTIDE SEQUENCE [LARGE SCALE GENOMIC DNA]</scope>
    <source>
        <strain>cv. Williams 82</strain>
        <tissue>Callus</tissue>
    </source>
</reference>
<reference key="4">
    <citation type="journal article" date="2007" name="Gene">
        <title>Plant hemoglobins: what we know six decades after their discovery.</title>
        <authorList>
            <person name="Garrocho-Villegas V."/>
            <person name="Gopalasubramaniam S.K."/>
            <person name="Arredondo-Peter R."/>
        </authorList>
    </citation>
    <scope>REVIEW ON PHYTOGLOBINS</scope>
</reference>
<reference key="5">
    <citation type="journal article" date="2008" name="Colloids Surf. B Biointerfaces">
        <title>Soil applied cobalt alters the nodulation, leg-haemoglobin content and antioxidant status of Glycine max (L.) Merr.</title>
        <authorList>
            <person name="Jayakumar K."/>
            <person name="Vijayarengan P."/>
            <person name="Changxing Z."/>
            <person name="Gomathinayagam M."/>
            <person name="Jaleel C.A."/>
        </authorList>
    </citation>
    <scope>REPRESSION BY COBALT</scope>
</reference>
<reference key="6">
    <citation type="journal article" date="2012" name="Proc. Natl. Acad. Sci. U.S.A.">
        <title>Leghemoglobin green derivatives with nitrated hemes evidence production of highly reactive nitrogen species during aging of legume nodules.</title>
        <authorList>
            <person name="Navascues J."/>
            <person name="Perez-Rontome C."/>
            <person name="Gay M."/>
            <person name="Marcos M."/>
            <person name="Yang F."/>
            <person name="Walker F.A."/>
            <person name="Desbois A."/>
            <person name="Abian J."/>
            <person name="Becana M."/>
        </authorList>
    </citation>
    <scope>FUNCTION</scope>
    <scope>NITRATION</scope>
    <scope>UV-VISIBLE; NMR AND RESONANCE RAMAN SPECTROSCOPIES</scope>
    <scope>ACETYLATION AT GLY-2</scope>
    <source>
        <strain>cv. Hobbit</strain>
        <strain>cv. Williams</strain>
    </source>
</reference>
<reference key="7">
    <citation type="journal article" date="2020" name="Ann. Bot.">
        <title>Excess nitrate induces nodule greening and reduces transcript and protein expression levels of soybean leghaemoglobins.</title>
        <authorList>
            <person name="Du M."/>
            <person name="Gao Z."/>
            <person name="Li X."/>
            <person name="Liao H."/>
        </authorList>
    </citation>
    <scope>FUNCTION</scope>
    <scope>TISSUE SPECIFICITY</scope>
    <scope>DEVELOPMENTAL STAGE</scope>
    <scope>SUPPRESSED BY NITROGEN</scope>
    <scope>GENE FAMILY</scope>
    <scope>NOMENCLATURE</scope>
    <source>
        <strain>cv. HN66</strain>
    </source>
</reference>
<reference key="8">
    <citation type="journal article" date="2022" name="Gene">
        <title>Uncovering the roles of hemoglobins in soybean facing water stress.</title>
        <authorList>
            <person name="Koltun A."/>
            <person name="Fuhrmann-Aoyagi M.B."/>
            <person name="Cardoso Moraes L.A."/>
            <person name="Lima Nepomuceno A."/>
            <person name="Simoes Azeredo Goncalves L."/>
            <person name="Mertz-Henning L.M."/>
        </authorList>
    </citation>
    <scope>GENE FAMILY</scope>
    <scope>NOMENCLATURE</scope>
    <source>
        <strain>cv. BR-4</strain>
        <strain>cv. Embrapa 45</strain>
    </source>
</reference>
<organism>
    <name type="scientific">Glycine max</name>
    <name type="common">Soybean</name>
    <name type="synonym">Glycine hispida</name>
    <dbReference type="NCBI Taxonomy" id="3847"/>
    <lineage>
        <taxon>Eukaryota</taxon>
        <taxon>Viridiplantae</taxon>
        <taxon>Streptophyta</taxon>
        <taxon>Embryophyta</taxon>
        <taxon>Tracheophyta</taxon>
        <taxon>Spermatophyta</taxon>
        <taxon>Magnoliopsida</taxon>
        <taxon>eudicotyledons</taxon>
        <taxon>Gunneridae</taxon>
        <taxon>Pentapetalae</taxon>
        <taxon>rosids</taxon>
        <taxon>fabids</taxon>
        <taxon>Fabales</taxon>
        <taxon>Fabaceae</taxon>
        <taxon>Papilionoideae</taxon>
        <taxon>50 kb inversion clade</taxon>
        <taxon>NPAAA clade</taxon>
        <taxon>indigoferoid/millettioid clade</taxon>
        <taxon>Phaseoleae</taxon>
        <taxon>Glycine</taxon>
        <taxon>Glycine subgen. Soja</taxon>
    </lineage>
</organism>
<name>LGB1_SOYBN</name>
<sequence length="145" mass="15582">MGAFTDKQEALVSSSFEAFKTNIPQYSVVFYTSILEKAPVAKDLFSFLANGVDPTNPKLTGHAEKLFGLVRDSAGQLKASGTVVIDAALGSIHAQKAITDPQFVVVKEALLKTIKEAVGDKWSDELSSAWEVAYDELAAAIKKAF</sequence>
<proteinExistence type="evidence at protein level"/>
<evidence type="ECO:0000250" key="1">
    <source>
        <dbReference type="UniProtKB" id="P02235"/>
    </source>
</evidence>
<evidence type="ECO:0000250" key="2">
    <source>
        <dbReference type="UniProtKB" id="P02240"/>
    </source>
</evidence>
<evidence type="ECO:0000250" key="3">
    <source>
        <dbReference type="UniProtKB" id="Q3C1F7"/>
    </source>
</evidence>
<evidence type="ECO:0000250" key="4">
    <source>
        <dbReference type="UniProtKB" id="Q43296"/>
    </source>
</evidence>
<evidence type="ECO:0000255" key="5">
    <source>
        <dbReference type="PROSITE-ProRule" id="PRU00238"/>
    </source>
</evidence>
<evidence type="ECO:0000269" key="6">
    <source>
    </source>
</evidence>
<evidence type="ECO:0000269" key="7">
    <source>
    </source>
</evidence>
<evidence type="ECO:0000269" key="8">
    <source>
    </source>
</evidence>
<evidence type="ECO:0000303" key="9">
    <source>
    </source>
</evidence>
<evidence type="ECO:0000303" key="10">
    <source>
    </source>
</evidence>
<evidence type="ECO:0000303" key="11">
    <source>
    </source>
</evidence>
<evidence type="ECO:0000303" key="12">
    <source>
    </source>
</evidence>
<evidence type="ECO:0000305" key="13"/>
<evidence type="ECO:0000305" key="14">
    <source>
    </source>
</evidence>
<evidence type="ECO:0000312" key="15">
    <source>
        <dbReference type="EMBL" id="KRH34684.1"/>
    </source>
</evidence>